<reference key="1">
    <citation type="journal article" date="2002" name="Environ. Microbiol.">
        <title>Complete genome sequence and comparative analysis of the metabolically versatile Pseudomonas putida KT2440.</title>
        <authorList>
            <person name="Nelson K.E."/>
            <person name="Weinel C."/>
            <person name="Paulsen I.T."/>
            <person name="Dodson R.J."/>
            <person name="Hilbert H."/>
            <person name="Martins dos Santos V.A.P."/>
            <person name="Fouts D.E."/>
            <person name="Gill S.R."/>
            <person name="Pop M."/>
            <person name="Holmes M."/>
            <person name="Brinkac L.M."/>
            <person name="Beanan M.J."/>
            <person name="DeBoy R.T."/>
            <person name="Daugherty S.C."/>
            <person name="Kolonay J.F."/>
            <person name="Madupu R."/>
            <person name="Nelson W.C."/>
            <person name="White O."/>
            <person name="Peterson J.D."/>
            <person name="Khouri H.M."/>
            <person name="Hance I."/>
            <person name="Chris Lee P."/>
            <person name="Holtzapple E.K."/>
            <person name="Scanlan D."/>
            <person name="Tran K."/>
            <person name="Moazzez A."/>
            <person name="Utterback T.R."/>
            <person name="Rizzo M."/>
            <person name="Lee K."/>
            <person name="Kosack D."/>
            <person name="Moestl D."/>
            <person name="Wedler H."/>
            <person name="Lauber J."/>
            <person name="Stjepandic D."/>
            <person name="Hoheisel J."/>
            <person name="Straetz M."/>
            <person name="Heim S."/>
            <person name="Kiewitz C."/>
            <person name="Eisen J.A."/>
            <person name="Timmis K.N."/>
            <person name="Duesterhoeft A."/>
            <person name="Tuemmler B."/>
            <person name="Fraser C.M."/>
        </authorList>
    </citation>
    <scope>NUCLEOTIDE SEQUENCE [LARGE SCALE GENOMIC DNA]</scope>
    <source>
        <strain>ATCC 47054 / DSM 6125 / CFBP 8728 / NCIMB 11950 / KT2440</strain>
    </source>
</reference>
<comment type="function">
    <text evidence="1">Involved in the binding of tRNA to the ribosomes.</text>
</comment>
<comment type="subunit">
    <text evidence="1">Part of the 30S ribosomal subunit.</text>
</comment>
<comment type="similarity">
    <text evidence="1">Belongs to the universal ribosomal protein uS10 family.</text>
</comment>
<sequence>MQNQQIRIRLKAFDHRLIDQSTQEIVETAKRTGAQVRGPIPLPTRKERFTVLVSPHVNKDARDQYEIRTHKRVLDIVQPTDKTVDALMKLDLAAGVEVQISLG</sequence>
<feature type="chain" id="PRO_0000146579" description="Small ribosomal subunit protein uS10">
    <location>
        <begin position="1"/>
        <end position="103"/>
    </location>
</feature>
<gene>
    <name evidence="1" type="primary">rpsJ</name>
    <name type="ordered locus">PP_0453</name>
</gene>
<accession>Q88QN6</accession>
<proteinExistence type="inferred from homology"/>
<evidence type="ECO:0000255" key="1">
    <source>
        <dbReference type="HAMAP-Rule" id="MF_00508"/>
    </source>
</evidence>
<evidence type="ECO:0000305" key="2"/>
<keyword id="KW-1185">Reference proteome</keyword>
<keyword id="KW-0687">Ribonucleoprotein</keyword>
<keyword id="KW-0689">Ribosomal protein</keyword>
<protein>
    <recommendedName>
        <fullName evidence="1">Small ribosomal subunit protein uS10</fullName>
    </recommendedName>
    <alternativeName>
        <fullName evidence="2">30S ribosomal protein S10</fullName>
    </alternativeName>
</protein>
<organism>
    <name type="scientific">Pseudomonas putida (strain ATCC 47054 / DSM 6125 / CFBP 8728 / NCIMB 11950 / KT2440)</name>
    <dbReference type="NCBI Taxonomy" id="160488"/>
    <lineage>
        <taxon>Bacteria</taxon>
        <taxon>Pseudomonadati</taxon>
        <taxon>Pseudomonadota</taxon>
        <taxon>Gammaproteobacteria</taxon>
        <taxon>Pseudomonadales</taxon>
        <taxon>Pseudomonadaceae</taxon>
        <taxon>Pseudomonas</taxon>
    </lineage>
</organism>
<dbReference type="EMBL" id="AE015451">
    <property type="protein sequence ID" value="AAN66083.1"/>
    <property type="molecule type" value="Genomic_DNA"/>
</dbReference>
<dbReference type="RefSeq" id="NP_742619.1">
    <property type="nucleotide sequence ID" value="NC_002947.4"/>
</dbReference>
<dbReference type="RefSeq" id="WP_003186070.1">
    <property type="nucleotide sequence ID" value="NZ_CP169744.1"/>
</dbReference>
<dbReference type="SMR" id="Q88QN6"/>
<dbReference type="STRING" id="160488.PP_0453"/>
<dbReference type="PaxDb" id="160488-PP_0453"/>
<dbReference type="GeneID" id="98636782"/>
<dbReference type="KEGG" id="ppu:PP_0453"/>
<dbReference type="PATRIC" id="fig|160488.4.peg.485"/>
<dbReference type="eggNOG" id="COG0051">
    <property type="taxonomic scope" value="Bacteria"/>
</dbReference>
<dbReference type="HOGENOM" id="CLU_122625_1_3_6"/>
<dbReference type="OrthoDB" id="9804464at2"/>
<dbReference type="PhylomeDB" id="Q88QN6"/>
<dbReference type="BioCyc" id="PPUT160488:G1G01-499-MONOMER"/>
<dbReference type="PRO" id="PR:Q88QN6"/>
<dbReference type="Proteomes" id="UP000000556">
    <property type="component" value="Chromosome"/>
</dbReference>
<dbReference type="GO" id="GO:1990904">
    <property type="term" value="C:ribonucleoprotein complex"/>
    <property type="evidence" value="ECO:0007669"/>
    <property type="project" value="UniProtKB-KW"/>
</dbReference>
<dbReference type="GO" id="GO:0005840">
    <property type="term" value="C:ribosome"/>
    <property type="evidence" value="ECO:0007669"/>
    <property type="project" value="UniProtKB-KW"/>
</dbReference>
<dbReference type="GO" id="GO:0003735">
    <property type="term" value="F:structural constituent of ribosome"/>
    <property type="evidence" value="ECO:0007669"/>
    <property type="project" value="InterPro"/>
</dbReference>
<dbReference type="GO" id="GO:0000049">
    <property type="term" value="F:tRNA binding"/>
    <property type="evidence" value="ECO:0007669"/>
    <property type="project" value="UniProtKB-UniRule"/>
</dbReference>
<dbReference type="GO" id="GO:0006412">
    <property type="term" value="P:translation"/>
    <property type="evidence" value="ECO:0007669"/>
    <property type="project" value="UniProtKB-UniRule"/>
</dbReference>
<dbReference type="FunFam" id="3.30.70.600:FF:000001">
    <property type="entry name" value="30S ribosomal protein S10"/>
    <property type="match status" value="1"/>
</dbReference>
<dbReference type="Gene3D" id="3.30.70.600">
    <property type="entry name" value="Ribosomal protein S10 domain"/>
    <property type="match status" value="1"/>
</dbReference>
<dbReference type="HAMAP" id="MF_00508">
    <property type="entry name" value="Ribosomal_uS10"/>
    <property type="match status" value="1"/>
</dbReference>
<dbReference type="InterPro" id="IPR001848">
    <property type="entry name" value="Ribosomal_uS10"/>
</dbReference>
<dbReference type="InterPro" id="IPR018268">
    <property type="entry name" value="Ribosomal_uS10_CS"/>
</dbReference>
<dbReference type="InterPro" id="IPR027486">
    <property type="entry name" value="Ribosomal_uS10_dom"/>
</dbReference>
<dbReference type="InterPro" id="IPR036838">
    <property type="entry name" value="Ribosomal_uS10_dom_sf"/>
</dbReference>
<dbReference type="NCBIfam" id="NF001861">
    <property type="entry name" value="PRK00596.1"/>
    <property type="match status" value="1"/>
</dbReference>
<dbReference type="NCBIfam" id="TIGR01049">
    <property type="entry name" value="rpsJ_bact"/>
    <property type="match status" value="1"/>
</dbReference>
<dbReference type="PANTHER" id="PTHR11700">
    <property type="entry name" value="30S RIBOSOMAL PROTEIN S10 FAMILY MEMBER"/>
    <property type="match status" value="1"/>
</dbReference>
<dbReference type="Pfam" id="PF00338">
    <property type="entry name" value="Ribosomal_S10"/>
    <property type="match status" value="1"/>
</dbReference>
<dbReference type="PRINTS" id="PR00971">
    <property type="entry name" value="RIBOSOMALS10"/>
</dbReference>
<dbReference type="SMART" id="SM01403">
    <property type="entry name" value="Ribosomal_S10"/>
    <property type="match status" value="1"/>
</dbReference>
<dbReference type="SUPFAM" id="SSF54999">
    <property type="entry name" value="Ribosomal protein S10"/>
    <property type="match status" value="1"/>
</dbReference>
<dbReference type="PROSITE" id="PS00361">
    <property type="entry name" value="RIBOSOMAL_S10"/>
    <property type="match status" value="1"/>
</dbReference>
<name>RS10_PSEPK</name>